<sequence>MRVPEIPEETASPLRAGDPPAQVAGHPLIRRSARVPRWRARLADHDAASLAELLRRAGGTASAARAVSGKVVRHAFGAEPGAPAPAWDARALAALGVGAWAHEALLALDPAPSLEIAERAPAQDDTLRLVLRAGDGALIESVLIPGPARTTLCVSSQVGCARACSFCETGRLGLERQLAAGEIVDQVRIARALAAERGGAPLRNLVFMGMGEPFDNLGEVLKAIRLLTDPRAFRFAPSHVTVSTVGVADKIEPFFRDARAELAVSLNAPDDARRQAIMPVNARFSMAALKEAIARALPPGRRVLFEYVLFDRFNDAPEDADLLAAYVAGLRCRVNVIPCNPGPDPALRPPSAARLDAFVARLSGHGVTTLVRRPRGRDVGGACGQLAGMARLRQPEPA</sequence>
<feature type="chain" id="PRO_0000350420" description="Probable RNA methyltransferase sce1580">
    <location>
        <begin position="1"/>
        <end position="398"/>
    </location>
</feature>
<feature type="domain" description="Radical SAM core" evidence="3">
    <location>
        <begin position="146"/>
        <end position="378"/>
    </location>
</feature>
<feature type="region of interest" description="Disordered" evidence="4">
    <location>
        <begin position="1"/>
        <end position="24"/>
    </location>
</feature>
<feature type="active site" description="Proton acceptor" evidence="2">
    <location>
        <position position="140"/>
    </location>
</feature>
<feature type="active site" description="S-methylcysteine intermediate" evidence="1">
    <location>
        <position position="383"/>
    </location>
</feature>
<feature type="binding site" evidence="1">
    <location>
        <position position="160"/>
    </location>
    <ligand>
        <name>[4Fe-4S] cluster</name>
        <dbReference type="ChEBI" id="CHEBI:49883"/>
        <note>4Fe-4S-S-AdoMet</note>
    </ligand>
</feature>
<feature type="binding site" evidence="1">
    <location>
        <position position="164"/>
    </location>
    <ligand>
        <name>[4Fe-4S] cluster</name>
        <dbReference type="ChEBI" id="CHEBI:49883"/>
        <note>4Fe-4S-S-AdoMet</note>
    </ligand>
</feature>
<feature type="binding site" evidence="1">
    <location>
        <position position="167"/>
    </location>
    <ligand>
        <name>[4Fe-4S] cluster</name>
        <dbReference type="ChEBI" id="CHEBI:49883"/>
        <note>4Fe-4S-S-AdoMet</note>
    </ligand>
</feature>
<feature type="binding site" evidence="1">
    <location>
        <begin position="211"/>
        <end position="212"/>
    </location>
    <ligand>
        <name>S-adenosyl-L-methionine</name>
        <dbReference type="ChEBI" id="CHEBI:59789"/>
    </ligand>
</feature>
<feature type="binding site" evidence="1">
    <location>
        <position position="243"/>
    </location>
    <ligand>
        <name>S-adenosyl-L-methionine</name>
        <dbReference type="ChEBI" id="CHEBI:59789"/>
    </ligand>
</feature>
<feature type="binding site" evidence="1">
    <location>
        <begin position="265"/>
        <end position="267"/>
    </location>
    <ligand>
        <name>S-adenosyl-L-methionine</name>
        <dbReference type="ChEBI" id="CHEBI:59789"/>
    </ligand>
</feature>
<feature type="binding site" evidence="1">
    <location>
        <position position="340"/>
    </location>
    <ligand>
        <name>S-adenosyl-L-methionine</name>
        <dbReference type="ChEBI" id="CHEBI:59789"/>
    </ligand>
</feature>
<feature type="disulfide bond" description="(transient)" evidence="1">
    <location>
        <begin position="153"/>
        <end position="383"/>
    </location>
</feature>
<accession>A9FD89</accession>
<keyword id="KW-0004">4Fe-4S</keyword>
<keyword id="KW-0963">Cytoplasm</keyword>
<keyword id="KW-1015">Disulfide bond</keyword>
<keyword id="KW-0408">Iron</keyword>
<keyword id="KW-0411">Iron-sulfur</keyword>
<keyword id="KW-0479">Metal-binding</keyword>
<keyword id="KW-0489">Methyltransferase</keyword>
<keyword id="KW-1185">Reference proteome</keyword>
<keyword id="KW-0949">S-adenosyl-L-methionine</keyword>
<keyword id="KW-0808">Transferase</keyword>
<proteinExistence type="inferred from homology"/>
<protein>
    <recommendedName>
        <fullName>Probable RNA methyltransferase sce1580</fullName>
        <ecNumber>2.1.1.-</ecNumber>
    </recommendedName>
</protein>
<gene>
    <name type="ordered locus">sce1580</name>
</gene>
<comment type="cofactor">
    <cofactor evidence="1">
        <name>[4Fe-4S] cluster</name>
        <dbReference type="ChEBI" id="CHEBI:49883"/>
    </cofactor>
    <text evidence="1">Binds 1 [4Fe-4S] cluster. The cluster is coordinated with 3 cysteines and an exchangeable S-adenosyl-L-methionine.</text>
</comment>
<comment type="subcellular location">
    <subcellularLocation>
        <location evidence="5">Cytoplasm</location>
    </subcellularLocation>
</comment>
<comment type="similarity">
    <text evidence="5">Belongs to the radical SAM superfamily. RlmN family.</text>
</comment>
<reference key="1">
    <citation type="journal article" date="2007" name="Nat. Biotechnol.">
        <title>Complete genome sequence of the myxobacterium Sorangium cellulosum.</title>
        <authorList>
            <person name="Schneiker S."/>
            <person name="Perlova O."/>
            <person name="Kaiser O."/>
            <person name="Gerth K."/>
            <person name="Alici A."/>
            <person name="Altmeyer M.O."/>
            <person name="Bartels D."/>
            <person name="Bekel T."/>
            <person name="Beyer S."/>
            <person name="Bode E."/>
            <person name="Bode H.B."/>
            <person name="Bolten C.J."/>
            <person name="Choudhuri J.V."/>
            <person name="Doss S."/>
            <person name="Elnakady Y.A."/>
            <person name="Frank B."/>
            <person name="Gaigalat L."/>
            <person name="Goesmann A."/>
            <person name="Groeger C."/>
            <person name="Gross F."/>
            <person name="Jelsbak L."/>
            <person name="Jelsbak L."/>
            <person name="Kalinowski J."/>
            <person name="Kegler C."/>
            <person name="Knauber T."/>
            <person name="Konietzny S."/>
            <person name="Kopp M."/>
            <person name="Krause L."/>
            <person name="Krug D."/>
            <person name="Linke B."/>
            <person name="Mahmud T."/>
            <person name="Martinez-Arias R."/>
            <person name="McHardy A.C."/>
            <person name="Merai M."/>
            <person name="Meyer F."/>
            <person name="Mormann S."/>
            <person name="Munoz-Dorado J."/>
            <person name="Perez J."/>
            <person name="Pradella S."/>
            <person name="Rachid S."/>
            <person name="Raddatz G."/>
            <person name="Rosenau F."/>
            <person name="Rueckert C."/>
            <person name="Sasse F."/>
            <person name="Scharfe M."/>
            <person name="Schuster S.C."/>
            <person name="Suen G."/>
            <person name="Treuner-Lange A."/>
            <person name="Velicer G.J."/>
            <person name="Vorholter F.-J."/>
            <person name="Weissman K.J."/>
            <person name="Welch R.D."/>
            <person name="Wenzel S.C."/>
            <person name="Whitworth D.E."/>
            <person name="Wilhelm S."/>
            <person name="Wittmann C."/>
            <person name="Bloecker H."/>
            <person name="Puehler A."/>
            <person name="Mueller R."/>
        </authorList>
    </citation>
    <scope>NUCLEOTIDE SEQUENCE [LARGE SCALE GENOMIC DNA]</scope>
    <source>
        <strain>So ce56</strain>
    </source>
</reference>
<dbReference type="EC" id="2.1.1.-"/>
<dbReference type="EMBL" id="AM746676">
    <property type="protein sequence ID" value="CAN91738.1"/>
    <property type="molecule type" value="Genomic_DNA"/>
</dbReference>
<dbReference type="RefSeq" id="WP_012234215.1">
    <property type="nucleotide sequence ID" value="NC_010162.1"/>
</dbReference>
<dbReference type="SMR" id="A9FD89"/>
<dbReference type="STRING" id="448385.sce1580"/>
<dbReference type="KEGG" id="scl:sce1580"/>
<dbReference type="eggNOG" id="COG0820">
    <property type="taxonomic scope" value="Bacteria"/>
</dbReference>
<dbReference type="HOGENOM" id="CLU_029101_3_1_7"/>
<dbReference type="OrthoDB" id="9793973at2"/>
<dbReference type="BioCyc" id="SCEL448385:SCE_RS08145-MONOMER"/>
<dbReference type="Proteomes" id="UP000002139">
    <property type="component" value="Chromosome"/>
</dbReference>
<dbReference type="GO" id="GO:0005737">
    <property type="term" value="C:cytoplasm"/>
    <property type="evidence" value="ECO:0007669"/>
    <property type="project" value="UniProtKB-SubCell"/>
</dbReference>
<dbReference type="GO" id="GO:0051539">
    <property type="term" value="F:4 iron, 4 sulfur cluster binding"/>
    <property type="evidence" value="ECO:0007669"/>
    <property type="project" value="UniProtKB-KW"/>
</dbReference>
<dbReference type="GO" id="GO:0046872">
    <property type="term" value="F:metal ion binding"/>
    <property type="evidence" value="ECO:0007669"/>
    <property type="project" value="UniProtKB-KW"/>
</dbReference>
<dbReference type="GO" id="GO:0008173">
    <property type="term" value="F:RNA methyltransferase activity"/>
    <property type="evidence" value="ECO:0007669"/>
    <property type="project" value="InterPro"/>
</dbReference>
<dbReference type="GO" id="GO:0070475">
    <property type="term" value="P:rRNA base methylation"/>
    <property type="evidence" value="ECO:0007669"/>
    <property type="project" value="TreeGrafter"/>
</dbReference>
<dbReference type="GO" id="GO:0030488">
    <property type="term" value="P:tRNA methylation"/>
    <property type="evidence" value="ECO:0007669"/>
    <property type="project" value="TreeGrafter"/>
</dbReference>
<dbReference type="CDD" id="cd01335">
    <property type="entry name" value="Radical_SAM"/>
    <property type="match status" value="1"/>
</dbReference>
<dbReference type="Gene3D" id="3.20.20.70">
    <property type="entry name" value="Aldolase class I"/>
    <property type="match status" value="1"/>
</dbReference>
<dbReference type="InterPro" id="IPR013785">
    <property type="entry name" value="Aldolase_TIM"/>
</dbReference>
<dbReference type="InterPro" id="IPR040072">
    <property type="entry name" value="Methyltransferase_A"/>
</dbReference>
<dbReference type="InterPro" id="IPR004383">
    <property type="entry name" value="rRNA_lsu_MTrfase_RlmN/Cfr"/>
</dbReference>
<dbReference type="InterPro" id="IPR007197">
    <property type="entry name" value="rSAM"/>
</dbReference>
<dbReference type="PANTHER" id="PTHR30544">
    <property type="entry name" value="23S RRNA METHYLTRANSFERASE"/>
    <property type="match status" value="1"/>
</dbReference>
<dbReference type="PANTHER" id="PTHR30544:SF9">
    <property type="entry name" value="RADICAL SAM SUPERFAMILY PROTEIN"/>
    <property type="match status" value="1"/>
</dbReference>
<dbReference type="Pfam" id="PF04055">
    <property type="entry name" value="Radical_SAM"/>
    <property type="match status" value="1"/>
</dbReference>
<dbReference type="SFLD" id="SFLDF00275">
    <property type="entry name" value="adenosine_C2_methyltransferase"/>
    <property type="match status" value="1"/>
</dbReference>
<dbReference type="SFLD" id="SFLDG01062">
    <property type="entry name" value="methyltransferase_(Class_A)"/>
    <property type="match status" value="1"/>
</dbReference>
<dbReference type="SUPFAM" id="SSF102114">
    <property type="entry name" value="Radical SAM enzymes"/>
    <property type="match status" value="1"/>
</dbReference>
<dbReference type="PROSITE" id="PS51918">
    <property type="entry name" value="RADICAL_SAM"/>
    <property type="match status" value="1"/>
</dbReference>
<name>Y1580_SORC5</name>
<organism>
    <name type="scientific">Sorangium cellulosum (strain So ce56)</name>
    <name type="common">Polyangium cellulosum (strain So ce56)</name>
    <dbReference type="NCBI Taxonomy" id="448385"/>
    <lineage>
        <taxon>Bacteria</taxon>
        <taxon>Pseudomonadati</taxon>
        <taxon>Myxococcota</taxon>
        <taxon>Polyangia</taxon>
        <taxon>Polyangiales</taxon>
        <taxon>Polyangiaceae</taxon>
        <taxon>Sorangium</taxon>
    </lineage>
</organism>
<evidence type="ECO:0000250" key="1"/>
<evidence type="ECO:0000255" key="2"/>
<evidence type="ECO:0000255" key="3">
    <source>
        <dbReference type="PROSITE-ProRule" id="PRU01266"/>
    </source>
</evidence>
<evidence type="ECO:0000256" key="4">
    <source>
        <dbReference type="SAM" id="MobiDB-lite"/>
    </source>
</evidence>
<evidence type="ECO:0000305" key="5"/>